<evidence type="ECO:0000255" key="1">
    <source>
        <dbReference type="HAMAP-Rule" id="MF_00041"/>
    </source>
</evidence>
<reference key="1">
    <citation type="journal article" date="2004" name="Nat. Biotechnol.">
        <title>The genome sequence of the anaerobic, sulfate-reducing bacterium Desulfovibrio vulgaris Hildenborough.</title>
        <authorList>
            <person name="Heidelberg J.F."/>
            <person name="Seshadri R."/>
            <person name="Haveman S.A."/>
            <person name="Hemme C.L."/>
            <person name="Paulsen I.T."/>
            <person name="Kolonay J.F."/>
            <person name="Eisen J.A."/>
            <person name="Ward N.L."/>
            <person name="Methe B.A."/>
            <person name="Brinkac L.M."/>
            <person name="Daugherty S.C."/>
            <person name="DeBoy R.T."/>
            <person name="Dodson R.J."/>
            <person name="Durkin A.S."/>
            <person name="Madupu R."/>
            <person name="Nelson W.C."/>
            <person name="Sullivan S.A."/>
            <person name="Fouts D.E."/>
            <person name="Haft D.H."/>
            <person name="Selengut J."/>
            <person name="Peterson J.D."/>
            <person name="Davidsen T.M."/>
            <person name="Zafar N."/>
            <person name="Zhou L."/>
            <person name="Radune D."/>
            <person name="Dimitrov G."/>
            <person name="Hance M."/>
            <person name="Tran K."/>
            <person name="Khouri H.M."/>
            <person name="Gill J."/>
            <person name="Utterback T.R."/>
            <person name="Feldblyum T.V."/>
            <person name="Wall J.D."/>
            <person name="Voordouw G."/>
            <person name="Fraser C.M."/>
        </authorList>
    </citation>
    <scope>NUCLEOTIDE SEQUENCE [LARGE SCALE GENOMIC DNA]</scope>
    <source>
        <strain>ATCC 29579 / DSM 644 / CCUG 34227 / NCIMB 8303 / VKM B-1760 / Hildenborough</strain>
    </source>
</reference>
<protein>
    <recommendedName>
        <fullName evidence="1">Cysteine--tRNA ligase</fullName>
        <ecNumber evidence="1">6.1.1.16</ecNumber>
    </recommendedName>
    <alternativeName>
        <fullName evidence="1">Cysteinyl-tRNA synthetase</fullName>
        <shortName evidence="1">CysRS</shortName>
    </alternativeName>
</protein>
<name>SYC_NITV2</name>
<organism>
    <name type="scientific">Nitratidesulfovibrio vulgaris (strain ATCC 29579 / DSM 644 / CCUG 34227 / NCIMB 8303 / VKM B-1760 / Hildenborough)</name>
    <name type="common">Desulfovibrio vulgaris</name>
    <dbReference type="NCBI Taxonomy" id="882"/>
    <lineage>
        <taxon>Bacteria</taxon>
        <taxon>Pseudomonadati</taxon>
        <taxon>Thermodesulfobacteriota</taxon>
        <taxon>Desulfovibrionia</taxon>
        <taxon>Desulfovibrionales</taxon>
        <taxon>Desulfovibrionaceae</taxon>
        <taxon>Nitratidesulfovibrio</taxon>
    </lineage>
</organism>
<accession>Q72BQ5</accession>
<feature type="chain" id="PRO_0000159393" description="Cysteine--tRNA ligase">
    <location>
        <begin position="1"/>
        <end position="485"/>
    </location>
</feature>
<feature type="short sequence motif" description="'HIGH' region">
    <location>
        <begin position="29"/>
        <end position="39"/>
    </location>
</feature>
<feature type="short sequence motif" description="'KMSKS' region">
    <location>
        <begin position="265"/>
        <end position="269"/>
    </location>
</feature>
<feature type="binding site" evidence="1">
    <location>
        <position position="27"/>
    </location>
    <ligand>
        <name>Zn(2+)</name>
        <dbReference type="ChEBI" id="CHEBI:29105"/>
    </ligand>
</feature>
<feature type="binding site" evidence="1">
    <location>
        <position position="208"/>
    </location>
    <ligand>
        <name>Zn(2+)</name>
        <dbReference type="ChEBI" id="CHEBI:29105"/>
    </ligand>
</feature>
<feature type="binding site" evidence="1">
    <location>
        <position position="233"/>
    </location>
    <ligand>
        <name>Zn(2+)</name>
        <dbReference type="ChEBI" id="CHEBI:29105"/>
    </ligand>
</feature>
<feature type="binding site" evidence="1">
    <location>
        <position position="237"/>
    </location>
    <ligand>
        <name>Zn(2+)</name>
        <dbReference type="ChEBI" id="CHEBI:29105"/>
    </ligand>
</feature>
<feature type="binding site" evidence="1">
    <location>
        <position position="268"/>
    </location>
    <ligand>
        <name>ATP</name>
        <dbReference type="ChEBI" id="CHEBI:30616"/>
    </ligand>
</feature>
<gene>
    <name evidence="1" type="primary">cysS</name>
    <name type="ordered locus">DVU_1579</name>
</gene>
<dbReference type="EC" id="6.1.1.16" evidence="1"/>
<dbReference type="EMBL" id="AE017285">
    <property type="protein sequence ID" value="AAS96057.1"/>
    <property type="molecule type" value="Genomic_DNA"/>
</dbReference>
<dbReference type="RefSeq" id="WP_010938870.1">
    <property type="nucleotide sequence ID" value="NC_002937.3"/>
</dbReference>
<dbReference type="RefSeq" id="YP_010798.1">
    <property type="nucleotide sequence ID" value="NC_002937.3"/>
</dbReference>
<dbReference type="SMR" id="Q72BQ5"/>
<dbReference type="STRING" id="882.DVU_1579"/>
<dbReference type="PaxDb" id="882-DVU_1579"/>
<dbReference type="EnsemblBacteria" id="AAS96057">
    <property type="protein sequence ID" value="AAS96057"/>
    <property type="gene ID" value="DVU_1579"/>
</dbReference>
<dbReference type="KEGG" id="dvu:DVU_1579"/>
<dbReference type="PATRIC" id="fig|882.5.peg.1455"/>
<dbReference type="eggNOG" id="COG0215">
    <property type="taxonomic scope" value="Bacteria"/>
</dbReference>
<dbReference type="HOGENOM" id="CLU_013528_0_1_7"/>
<dbReference type="OrthoDB" id="9815130at2"/>
<dbReference type="PhylomeDB" id="Q72BQ5"/>
<dbReference type="Proteomes" id="UP000002194">
    <property type="component" value="Chromosome"/>
</dbReference>
<dbReference type="GO" id="GO:0005829">
    <property type="term" value="C:cytosol"/>
    <property type="evidence" value="ECO:0007669"/>
    <property type="project" value="TreeGrafter"/>
</dbReference>
<dbReference type="GO" id="GO:0005524">
    <property type="term" value="F:ATP binding"/>
    <property type="evidence" value="ECO:0007669"/>
    <property type="project" value="UniProtKB-UniRule"/>
</dbReference>
<dbReference type="GO" id="GO:0004817">
    <property type="term" value="F:cysteine-tRNA ligase activity"/>
    <property type="evidence" value="ECO:0007669"/>
    <property type="project" value="UniProtKB-UniRule"/>
</dbReference>
<dbReference type="GO" id="GO:0008270">
    <property type="term" value="F:zinc ion binding"/>
    <property type="evidence" value="ECO:0007669"/>
    <property type="project" value="UniProtKB-UniRule"/>
</dbReference>
<dbReference type="GO" id="GO:0006423">
    <property type="term" value="P:cysteinyl-tRNA aminoacylation"/>
    <property type="evidence" value="ECO:0007669"/>
    <property type="project" value="UniProtKB-UniRule"/>
</dbReference>
<dbReference type="CDD" id="cd00672">
    <property type="entry name" value="CysRS_core"/>
    <property type="match status" value="1"/>
</dbReference>
<dbReference type="FunFam" id="3.40.50.620:FF:000009">
    <property type="entry name" value="Cysteine--tRNA ligase"/>
    <property type="match status" value="1"/>
</dbReference>
<dbReference type="Gene3D" id="1.20.120.1910">
    <property type="entry name" value="Cysteine-tRNA ligase, C-terminal anti-codon recognition domain"/>
    <property type="match status" value="1"/>
</dbReference>
<dbReference type="Gene3D" id="3.40.50.620">
    <property type="entry name" value="HUPs"/>
    <property type="match status" value="1"/>
</dbReference>
<dbReference type="HAMAP" id="MF_00041">
    <property type="entry name" value="Cys_tRNA_synth"/>
    <property type="match status" value="1"/>
</dbReference>
<dbReference type="InterPro" id="IPR015803">
    <property type="entry name" value="Cys-tRNA-ligase"/>
</dbReference>
<dbReference type="InterPro" id="IPR015273">
    <property type="entry name" value="Cys-tRNA-synt_Ia_DALR"/>
</dbReference>
<dbReference type="InterPro" id="IPR024909">
    <property type="entry name" value="Cys-tRNA/MSH_ligase"/>
</dbReference>
<dbReference type="InterPro" id="IPR056411">
    <property type="entry name" value="CysS_C"/>
</dbReference>
<dbReference type="InterPro" id="IPR014729">
    <property type="entry name" value="Rossmann-like_a/b/a_fold"/>
</dbReference>
<dbReference type="InterPro" id="IPR032678">
    <property type="entry name" value="tRNA-synt_1_cat_dom"/>
</dbReference>
<dbReference type="InterPro" id="IPR009080">
    <property type="entry name" value="tRNAsynth_Ia_anticodon-bd"/>
</dbReference>
<dbReference type="NCBIfam" id="TIGR00435">
    <property type="entry name" value="cysS"/>
    <property type="match status" value="1"/>
</dbReference>
<dbReference type="PANTHER" id="PTHR10890:SF3">
    <property type="entry name" value="CYSTEINE--TRNA LIGASE, CYTOPLASMIC"/>
    <property type="match status" value="1"/>
</dbReference>
<dbReference type="PANTHER" id="PTHR10890">
    <property type="entry name" value="CYSTEINYL-TRNA SYNTHETASE"/>
    <property type="match status" value="1"/>
</dbReference>
<dbReference type="Pfam" id="PF23493">
    <property type="entry name" value="CysS_C"/>
    <property type="match status" value="1"/>
</dbReference>
<dbReference type="Pfam" id="PF09190">
    <property type="entry name" value="DALR_2"/>
    <property type="match status" value="1"/>
</dbReference>
<dbReference type="Pfam" id="PF01406">
    <property type="entry name" value="tRNA-synt_1e"/>
    <property type="match status" value="1"/>
</dbReference>
<dbReference type="PRINTS" id="PR00983">
    <property type="entry name" value="TRNASYNTHCYS"/>
</dbReference>
<dbReference type="SMART" id="SM00840">
    <property type="entry name" value="DALR_2"/>
    <property type="match status" value="1"/>
</dbReference>
<dbReference type="SUPFAM" id="SSF47323">
    <property type="entry name" value="Anticodon-binding domain of a subclass of class I aminoacyl-tRNA synthetases"/>
    <property type="match status" value="1"/>
</dbReference>
<dbReference type="SUPFAM" id="SSF52374">
    <property type="entry name" value="Nucleotidylyl transferase"/>
    <property type="match status" value="1"/>
</dbReference>
<keyword id="KW-0030">Aminoacyl-tRNA synthetase</keyword>
<keyword id="KW-0067">ATP-binding</keyword>
<keyword id="KW-0963">Cytoplasm</keyword>
<keyword id="KW-0436">Ligase</keyword>
<keyword id="KW-0479">Metal-binding</keyword>
<keyword id="KW-0547">Nucleotide-binding</keyword>
<keyword id="KW-0648">Protein biosynthesis</keyword>
<keyword id="KW-1185">Reference proteome</keyword>
<keyword id="KW-0862">Zinc</keyword>
<comment type="catalytic activity">
    <reaction evidence="1">
        <text>tRNA(Cys) + L-cysteine + ATP = L-cysteinyl-tRNA(Cys) + AMP + diphosphate</text>
        <dbReference type="Rhea" id="RHEA:17773"/>
        <dbReference type="Rhea" id="RHEA-COMP:9661"/>
        <dbReference type="Rhea" id="RHEA-COMP:9679"/>
        <dbReference type="ChEBI" id="CHEBI:30616"/>
        <dbReference type="ChEBI" id="CHEBI:33019"/>
        <dbReference type="ChEBI" id="CHEBI:35235"/>
        <dbReference type="ChEBI" id="CHEBI:78442"/>
        <dbReference type="ChEBI" id="CHEBI:78517"/>
        <dbReference type="ChEBI" id="CHEBI:456215"/>
        <dbReference type="EC" id="6.1.1.16"/>
    </reaction>
</comment>
<comment type="cofactor">
    <cofactor evidence="1">
        <name>Zn(2+)</name>
        <dbReference type="ChEBI" id="CHEBI:29105"/>
    </cofactor>
    <text evidence="1">Binds 1 zinc ion per subunit.</text>
</comment>
<comment type="subunit">
    <text evidence="1">Monomer.</text>
</comment>
<comment type="subcellular location">
    <subcellularLocation>
        <location evidence="1">Cytoplasm</location>
    </subcellularLocation>
</comment>
<comment type="similarity">
    <text evidence="1">Belongs to the class-I aminoacyl-tRNA synthetase family.</text>
</comment>
<proteinExistence type="inferred from homology"/>
<sequence>MQIYNSLSRRKELFTPAVPGKVNMYVCGITAYDLCHIGHARSAVVFDVLVRYLRHTGLDVTFARNFTDVDDKIIKRANEEGLTSQQVAEKYIDTFYEDMDRLNVLRADIEPKATGHILEMIALCEKLIAKGKAYATPSGDVYFRVRSFPEYGKLSGRDIDDMRSGARVAPGEEKEDPLDFALWKAAKPGEPSWTSPWGEGRPGWHIECSAMSEKHMPLPLDIHGGGQDLIFPHHENEIAQTEAALDKPFVRYWMHNGFVQVDAEKMSKSLGNFKTIRDILEGYLPEVLRFFLLTKHYRSPIDFTFDSMDEAEKSLKRIYEALSLARTERSRSKWSATPLPADVTAEFDTLDRAFDEALEDDLNTAAALGHVFGTIRLVNRLLEDKNLRKSAETLALLERLDGLVAKWMKVLGVFGREPEAFLSDLKECRIRRKGIDTTKVDALLEERKSVRAAKDFARADAIRDELAALGIEVRDTPSGAVWDVL</sequence>